<dbReference type="EC" id="7.1.1.-" evidence="1"/>
<dbReference type="EMBL" id="CU468230">
    <property type="protein sequence ID" value="CAP02012.1"/>
    <property type="molecule type" value="Genomic_DNA"/>
</dbReference>
<dbReference type="SMR" id="B0VU49"/>
<dbReference type="KEGG" id="abm:ABSDF2707"/>
<dbReference type="HOGENOM" id="CLU_067218_4_3_6"/>
<dbReference type="Proteomes" id="UP000001741">
    <property type="component" value="Chromosome"/>
</dbReference>
<dbReference type="GO" id="GO:0005886">
    <property type="term" value="C:plasma membrane"/>
    <property type="evidence" value="ECO:0007669"/>
    <property type="project" value="UniProtKB-SubCell"/>
</dbReference>
<dbReference type="GO" id="GO:0051539">
    <property type="term" value="F:4 iron, 4 sulfur cluster binding"/>
    <property type="evidence" value="ECO:0007669"/>
    <property type="project" value="UniProtKB-KW"/>
</dbReference>
<dbReference type="GO" id="GO:0005506">
    <property type="term" value="F:iron ion binding"/>
    <property type="evidence" value="ECO:0007669"/>
    <property type="project" value="UniProtKB-UniRule"/>
</dbReference>
<dbReference type="GO" id="GO:0050136">
    <property type="term" value="F:NADH:ubiquinone reductase (non-electrogenic) activity"/>
    <property type="evidence" value="ECO:0007669"/>
    <property type="project" value="UniProtKB-UniRule"/>
</dbReference>
<dbReference type="GO" id="GO:0048038">
    <property type="term" value="F:quinone binding"/>
    <property type="evidence" value="ECO:0007669"/>
    <property type="project" value="UniProtKB-KW"/>
</dbReference>
<dbReference type="GO" id="GO:0009060">
    <property type="term" value="P:aerobic respiration"/>
    <property type="evidence" value="ECO:0007669"/>
    <property type="project" value="TreeGrafter"/>
</dbReference>
<dbReference type="FunFam" id="3.30.70.3270:FF:000002">
    <property type="entry name" value="NADH-quinone oxidoreductase subunit I"/>
    <property type="match status" value="1"/>
</dbReference>
<dbReference type="Gene3D" id="3.30.70.3270">
    <property type="match status" value="1"/>
</dbReference>
<dbReference type="HAMAP" id="MF_01351">
    <property type="entry name" value="NDH1_NuoI"/>
    <property type="match status" value="1"/>
</dbReference>
<dbReference type="InterPro" id="IPR017896">
    <property type="entry name" value="4Fe4S_Fe-S-bd"/>
</dbReference>
<dbReference type="InterPro" id="IPR017900">
    <property type="entry name" value="4Fe4S_Fe_S_CS"/>
</dbReference>
<dbReference type="InterPro" id="IPR010226">
    <property type="entry name" value="NADH_quinone_OxRdtase_chainI"/>
</dbReference>
<dbReference type="NCBIfam" id="TIGR01971">
    <property type="entry name" value="NuoI"/>
    <property type="match status" value="1"/>
</dbReference>
<dbReference type="NCBIfam" id="NF004536">
    <property type="entry name" value="PRK05888.1-1"/>
    <property type="match status" value="1"/>
</dbReference>
<dbReference type="PANTHER" id="PTHR10849:SF20">
    <property type="entry name" value="NADH DEHYDROGENASE [UBIQUINONE] IRON-SULFUR PROTEIN 8, MITOCHONDRIAL"/>
    <property type="match status" value="1"/>
</dbReference>
<dbReference type="PANTHER" id="PTHR10849">
    <property type="entry name" value="NADH DEHYDROGENASE UBIQUINONE IRON-SULFUR PROTEIN 8, MITOCHONDRIAL"/>
    <property type="match status" value="1"/>
</dbReference>
<dbReference type="Pfam" id="PF12838">
    <property type="entry name" value="Fer4_7"/>
    <property type="match status" value="1"/>
</dbReference>
<dbReference type="SUPFAM" id="SSF54862">
    <property type="entry name" value="4Fe-4S ferredoxins"/>
    <property type="match status" value="1"/>
</dbReference>
<dbReference type="PROSITE" id="PS00198">
    <property type="entry name" value="4FE4S_FER_1"/>
    <property type="match status" value="2"/>
</dbReference>
<dbReference type="PROSITE" id="PS51379">
    <property type="entry name" value="4FE4S_FER_2"/>
    <property type="match status" value="2"/>
</dbReference>
<comment type="function">
    <text evidence="1">NDH-1 shuttles electrons from NADH, via FMN and iron-sulfur (Fe-S) centers, to quinones in the respiratory chain. The immediate electron acceptor for the enzyme in this species is believed to be ubiquinone. Couples the redox reaction to proton translocation (for every two electrons transferred, four hydrogen ions are translocated across the cytoplasmic membrane), and thus conserves the redox energy in a proton gradient.</text>
</comment>
<comment type="catalytic activity">
    <reaction evidence="1">
        <text>a quinone + NADH + 5 H(+)(in) = a quinol + NAD(+) + 4 H(+)(out)</text>
        <dbReference type="Rhea" id="RHEA:57888"/>
        <dbReference type="ChEBI" id="CHEBI:15378"/>
        <dbReference type="ChEBI" id="CHEBI:24646"/>
        <dbReference type="ChEBI" id="CHEBI:57540"/>
        <dbReference type="ChEBI" id="CHEBI:57945"/>
        <dbReference type="ChEBI" id="CHEBI:132124"/>
    </reaction>
</comment>
<comment type="cofactor">
    <cofactor evidence="1">
        <name>[4Fe-4S] cluster</name>
        <dbReference type="ChEBI" id="CHEBI:49883"/>
    </cofactor>
    <text evidence="1">Binds 2 [4Fe-4S] clusters per subunit.</text>
</comment>
<comment type="subunit">
    <text evidence="1">NDH-1 is composed of 14 different subunits. Subunits NuoA, H, J, K, L, M, N constitute the membrane sector of the complex.</text>
</comment>
<comment type="subcellular location">
    <subcellularLocation>
        <location evidence="1">Cell inner membrane</location>
        <topology evidence="1">Peripheral membrane protein</topology>
    </subcellularLocation>
</comment>
<comment type="similarity">
    <text evidence="1">Belongs to the complex I 23 kDa subunit family.</text>
</comment>
<name>NUOI_ACIBS</name>
<reference key="1">
    <citation type="journal article" date="2008" name="PLoS ONE">
        <title>Comparative analysis of Acinetobacters: three genomes for three lifestyles.</title>
        <authorList>
            <person name="Vallenet D."/>
            <person name="Nordmann P."/>
            <person name="Barbe V."/>
            <person name="Poirel L."/>
            <person name="Mangenot S."/>
            <person name="Bataille E."/>
            <person name="Dossat C."/>
            <person name="Gas S."/>
            <person name="Kreimeyer A."/>
            <person name="Lenoble P."/>
            <person name="Oztas S."/>
            <person name="Poulain J."/>
            <person name="Segurens B."/>
            <person name="Robert C."/>
            <person name="Abergel C."/>
            <person name="Claverie J.-M."/>
            <person name="Raoult D."/>
            <person name="Medigue C."/>
            <person name="Weissenbach J."/>
            <person name="Cruveiller S."/>
        </authorList>
    </citation>
    <scope>NUCLEOTIDE SEQUENCE [LARGE SCALE GENOMIC DNA]</scope>
    <source>
        <strain>SDF</strain>
    </source>
</reference>
<feature type="chain" id="PRO_1000143631" description="NADH-quinone oxidoreductase subunit I">
    <location>
        <begin position="1"/>
        <end position="180"/>
    </location>
</feature>
<feature type="domain" description="4Fe-4S ferredoxin-type 1" evidence="1">
    <location>
        <begin position="50"/>
        <end position="80"/>
    </location>
</feature>
<feature type="domain" description="4Fe-4S ferredoxin-type 2" evidence="1">
    <location>
        <begin position="90"/>
        <end position="119"/>
    </location>
</feature>
<feature type="binding site" evidence="1">
    <location>
        <position position="60"/>
    </location>
    <ligand>
        <name>[4Fe-4S] cluster</name>
        <dbReference type="ChEBI" id="CHEBI:49883"/>
        <label>1</label>
    </ligand>
</feature>
<feature type="binding site" evidence="1">
    <location>
        <position position="63"/>
    </location>
    <ligand>
        <name>[4Fe-4S] cluster</name>
        <dbReference type="ChEBI" id="CHEBI:49883"/>
        <label>1</label>
    </ligand>
</feature>
<feature type="binding site" evidence="1">
    <location>
        <position position="66"/>
    </location>
    <ligand>
        <name>[4Fe-4S] cluster</name>
        <dbReference type="ChEBI" id="CHEBI:49883"/>
        <label>1</label>
    </ligand>
</feature>
<feature type="binding site" evidence="1">
    <location>
        <position position="70"/>
    </location>
    <ligand>
        <name>[4Fe-4S] cluster</name>
        <dbReference type="ChEBI" id="CHEBI:49883"/>
        <label>2</label>
    </ligand>
</feature>
<feature type="binding site" evidence="1">
    <location>
        <position position="99"/>
    </location>
    <ligand>
        <name>[4Fe-4S] cluster</name>
        <dbReference type="ChEBI" id="CHEBI:49883"/>
        <label>2</label>
    </ligand>
</feature>
<feature type="binding site" evidence="1">
    <location>
        <position position="102"/>
    </location>
    <ligand>
        <name>[4Fe-4S] cluster</name>
        <dbReference type="ChEBI" id="CHEBI:49883"/>
        <label>2</label>
    </ligand>
</feature>
<feature type="binding site" evidence="1">
    <location>
        <position position="105"/>
    </location>
    <ligand>
        <name>[4Fe-4S] cluster</name>
        <dbReference type="ChEBI" id="CHEBI:49883"/>
        <label>2</label>
    </ligand>
</feature>
<feature type="binding site" evidence="1">
    <location>
        <position position="109"/>
    </location>
    <ligand>
        <name>[4Fe-4S] cluster</name>
        <dbReference type="ChEBI" id="CHEBI:49883"/>
        <label>1</label>
    </ligand>
</feature>
<proteinExistence type="inferred from homology"/>
<evidence type="ECO:0000255" key="1">
    <source>
        <dbReference type="HAMAP-Rule" id="MF_01351"/>
    </source>
</evidence>
<protein>
    <recommendedName>
        <fullName evidence="1">NADH-quinone oxidoreductase subunit I</fullName>
        <ecNumber evidence="1">7.1.1.-</ecNumber>
    </recommendedName>
    <alternativeName>
        <fullName evidence="1">NADH dehydrogenase I subunit I</fullName>
    </alternativeName>
    <alternativeName>
        <fullName evidence="1">NDH-1 subunit I</fullName>
    </alternativeName>
</protein>
<organism>
    <name type="scientific">Acinetobacter baumannii (strain SDF)</name>
    <dbReference type="NCBI Taxonomy" id="509170"/>
    <lineage>
        <taxon>Bacteria</taxon>
        <taxon>Pseudomonadati</taxon>
        <taxon>Pseudomonadota</taxon>
        <taxon>Gammaproteobacteria</taxon>
        <taxon>Moraxellales</taxon>
        <taxon>Moraxellaceae</taxon>
        <taxon>Acinetobacter</taxon>
        <taxon>Acinetobacter calcoaceticus/baumannii complex</taxon>
    </lineage>
</organism>
<keyword id="KW-0004">4Fe-4S</keyword>
<keyword id="KW-0997">Cell inner membrane</keyword>
<keyword id="KW-1003">Cell membrane</keyword>
<keyword id="KW-0408">Iron</keyword>
<keyword id="KW-0411">Iron-sulfur</keyword>
<keyword id="KW-0472">Membrane</keyword>
<keyword id="KW-0479">Metal-binding</keyword>
<keyword id="KW-0520">NAD</keyword>
<keyword id="KW-0874">Quinone</keyword>
<keyword id="KW-0677">Repeat</keyword>
<keyword id="KW-1278">Translocase</keyword>
<keyword id="KW-0830">Ubiquinone</keyword>
<accession>B0VU49</accession>
<sequence>MYKILAGVGSIVRTLFMVFTHGFRKRDTILYPEVPAEEIVPPRYRGRIILTRDPDGEERCVACNLCAVACPVGCISLQKAEKEDGRWYPEFFRINFSRCIFCGMCEEACPTTAIQLTPDFELGEYVRQDLVYEKENLLISGPGKYPDYNFYRVTGMAINGKEKGQAQKESAPIDVRSLLP</sequence>
<gene>
    <name evidence="1" type="primary">nuoI</name>
    <name type="ordered locus">ABSDF2707</name>
</gene>